<comment type="catalytic activity">
    <reaction evidence="1">
        <text>5-amino-1-(5-phospho-D-ribosyl)imidazole-4-carboxylate + L-aspartate + ATP = (2S)-2-[5-amino-1-(5-phospho-beta-D-ribosyl)imidazole-4-carboxamido]succinate + ADP + phosphate + 2 H(+)</text>
        <dbReference type="Rhea" id="RHEA:22628"/>
        <dbReference type="ChEBI" id="CHEBI:15378"/>
        <dbReference type="ChEBI" id="CHEBI:29991"/>
        <dbReference type="ChEBI" id="CHEBI:30616"/>
        <dbReference type="ChEBI" id="CHEBI:43474"/>
        <dbReference type="ChEBI" id="CHEBI:58443"/>
        <dbReference type="ChEBI" id="CHEBI:77657"/>
        <dbReference type="ChEBI" id="CHEBI:456216"/>
        <dbReference type="EC" id="6.3.2.6"/>
    </reaction>
</comment>
<comment type="pathway">
    <text evidence="1">Purine metabolism; IMP biosynthesis via de novo pathway; 5-amino-1-(5-phospho-D-ribosyl)imidazole-4-carboxamide from 5-amino-1-(5-phospho-D-ribosyl)imidazole-4-carboxylate: step 1/2.</text>
</comment>
<comment type="similarity">
    <text evidence="1">Belongs to the SAICAR synthetase family.</text>
</comment>
<evidence type="ECO:0000255" key="1">
    <source>
        <dbReference type="HAMAP-Rule" id="MF_00137"/>
    </source>
</evidence>
<dbReference type="EC" id="6.3.2.6" evidence="1"/>
<dbReference type="EMBL" id="AE008922">
    <property type="protein sequence ID" value="AAM39771.1"/>
    <property type="molecule type" value="Genomic_DNA"/>
</dbReference>
<dbReference type="RefSeq" id="NP_635847.1">
    <property type="nucleotide sequence ID" value="NC_003902.1"/>
</dbReference>
<dbReference type="SMR" id="Q8PD87"/>
<dbReference type="STRING" id="190485.XCC0453"/>
<dbReference type="EnsemblBacteria" id="AAM39771">
    <property type="protein sequence ID" value="AAM39771"/>
    <property type="gene ID" value="XCC0453"/>
</dbReference>
<dbReference type="KEGG" id="xcc:XCC0453"/>
<dbReference type="PATRIC" id="fig|190485.4.peg.499"/>
<dbReference type="eggNOG" id="COG0152">
    <property type="taxonomic scope" value="Bacteria"/>
</dbReference>
<dbReference type="HOGENOM" id="CLU_045637_0_0_6"/>
<dbReference type="OrthoDB" id="9801549at2"/>
<dbReference type="UniPathway" id="UPA00074">
    <property type="reaction ID" value="UER00131"/>
</dbReference>
<dbReference type="Proteomes" id="UP000001010">
    <property type="component" value="Chromosome"/>
</dbReference>
<dbReference type="GO" id="GO:0005524">
    <property type="term" value="F:ATP binding"/>
    <property type="evidence" value="ECO:0007669"/>
    <property type="project" value="UniProtKB-KW"/>
</dbReference>
<dbReference type="GO" id="GO:0004639">
    <property type="term" value="F:phosphoribosylaminoimidazolesuccinocarboxamide synthase activity"/>
    <property type="evidence" value="ECO:0000318"/>
    <property type="project" value="GO_Central"/>
</dbReference>
<dbReference type="GO" id="GO:0006189">
    <property type="term" value="P:'de novo' IMP biosynthetic process"/>
    <property type="evidence" value="ECO:0000318"/>
    <property type="project" value="GO_Central"/>
</dbReference>
<dbReference type="CDD" id="cd01414">
    <property type="entry name" value="SAICAR_synt_Sc"/>
    <property type="match status" value="1"/>
</dbReference>
<dbReference type="FunFam" id="3.30.200.20:FF:000365">
    <property type="entry name" value="Phosphoribosylaminoimidazole-succinocarboxamide synthase"/>
    <property type="match status" value="1"/>
</dbReference>
<dbReference type="FunFam" id="3.30.470.20:FF:000015">
    <property type="entry name" value="Phosphoribosylaminoimidazole-succinocarboxamide synthase"/>
    <property type="match status" value="1"/>
</dbReference>
<dbReference type="Gene3D" id="3.30.470.20">
    <property type="entry name" value="ATP-grasp fold, B domain"/>
    <property type="match status" value="1"/>
</dbReference>
<dbReference type="Gene3D" id="3.30.200.20">
    <property type="entry name" value="Phosphorylase Kinase, domain 1"/>
    <property type="match status" value="1"/>
</dbReference>
<dbReference type="HAMAP" id="MF_00137">
    <property type="entry name" value="SAICAR_synth"/>
    <property type="match status" value="1"/>
</dbReference>
<dbReference type="InterPro" id="IPR028923">
    <property type="entry name" value="SAICAR_synt/ADE2_N"/>
</dbReference>
<dbReference type="InterPro" id="IPR001636">
    <property type="entry name" value="SAICAR_synth"/>
</dbReference>
<dbReference type="InterPro" id="IPR018236">
    <property type="entry name" value="SAICAR_synthetase_CS"/>
</dbReference>
<dbReference type="NCBIfam" id="NF010568">
    <property type="entry name" value="PRK13961.1"/>
    <property type="match status" value="1"/>
</dbReference>
<dbReference type="NCBIfam" id="TIGR00081">
    <property type="entry name" value="purC"/>
    <property type="match status" value="1"/>
</dbReference>
<dbReference type="PANTHER" id="PTHR43700">
    <property type="entry name" value="PHOSPHORIBOSYLAMINOIMIDAZOLE-SUCCINOCARBOXAMIDE SYNTHASE"/>
    <property type="match status" value="1"/>
</dbReference>
<dbReference type="PANTHER" id="PTHR43700:SF1">
    <property type="entry name" value="PHOSPHORIBOSYLAMINOIMIDAZOLE-SUCCINOCARBOXAMIDE SYNTHASE"/>
    <property type="match status" value="1"/>
</dbReference>
<dbReference type="Pfam" id="PF01259">
    <property type="entry name" value="SAICAR_synt"/>
    <property type="match status" value="1"/>
</dbReference>
<dbReference type="SUPFAM" id="SSF56104">
    <property type="entry name" value="SAICAR synthase-like"/>
    <property type="match status" value="1"/>
</dbReference>
<dbReference type="PROSITE" id="PS01057">
    <property type="entry name" value="SAICAR_SYNTHETASE_1"/>
    <property type="match status" value="1"/>
</dbReference>
<dbReference type="PROSITE" id="PS01058">
    <property type="entry name" value="SAICAR_SYNTHETASE_2"/>
    <property type="match status" value="1"/>
</dbReference>
<accession>Q8PD87</accession>
<sequence>MPVSTTLLQSDLPGLPLRHRGKVRDVFDIPRDRLPADAPPGDYLLMVATDRLSAFDVVLPDPIPGKGEMLCQVSNFWFHKTEHLMPNHLVDIRVEQVLPEGVDPALYAKRAVVTRKLKPVPVEAIARGYLIGSGWKDYQRTGKISGIELPDGLRQAEKLPEPIFTPSTKAAVGDHDENIDFDAMVKTVGAELAERVRDATLRIYRFAADFAAERGILLADTKFEFGTDADGRLYIMDEMLTPDSSRYWPADQYELGTSPPSYDKQFVRDYLETLDWGKTAPGPRLPADVIERTRAKYAEALQRLAGISVD</sequence>
<feature type="chain" id="PRO_0000100902" description="Phosphoribosylaminoimidazole-succinocarboxamide synthase">
    <location>
        <begin position="1"/>
        <end position="310"/>
    </location>
</feature>
<proteinExistence type="inferred from homology"/>
<reference key="1">
    <citation type="journal article" date="2002" name="Nature">
        <title>Comparison of the genomes of two Xanthomonas pathogens with differing host specificities.</title>
        <authorList>
            <person name="da Silva A.C.R."/>
            <person name="Ferro J.A."/>
            <person name="Reinach F.C."/>
            <person name="Farah C.S."/>
            <person name="Furlan L.R."/>
            <person name="Quaggio R.B."/>
            <person name="Monteiro-Vitorello C.B."/>
            <person name="Van Sluys M.A."/>
            <person name="Almeida N.F. Jr."/>
            <person name="Alves L.M.C."/>
            <person name="do Amaral A.M."/>
            <person name="Bertolini M.C."/>
            <person name="Camargo L.E.A."/>
            <person name="Camarotte G."/>
            <person name="Cannavan F."/>
            <person name="Cardozo J."/>
            <person name="Chambergo F."/>
            <person name="Ciapina L.P."/>
            <person name="Cicarelli R.M.B."/>
            <person name="Coutinho L.L."/>
            <person name="Cursino-Santos J.R."/>
            <person name="El-Dorry H."/>
            <person name="Faria J.B."/>
            <person name="Ferreira A.J.S."/>
            <person name="Ferreira R.C.C."/>
            <person name="Ferro M.I.T."/>
            <person name="Formighieri E.F."/>
            <person name="Franco M.C."/>
            <person name="Greggio C.C."/>
            <person name="Gruber A."/>
            <person name="Katsuyama A.M."/>
            <person name="Kishi L.T."/>
            <person name="Leite R.P."/>
            <person name="Lemos E.G.M."/>
            <person name="Lemos M.V.F."/>
            <person name="Locali E.C."/>
            <person name="Machado M.A."/>
            <person name="Madeira A.M.B.N."/>
            <person name="Martinez-Rossi N.M."/>
            <person name="Martins E.C."/>
            <person name="Meidanis J."/>
            <person name="Menck C.F.M."/>
            <person name="Miyaki C.Y."/>
            <person name="Moon D.H."/>
            <person name="Moreira L.M."/>
            <person name="Novo M.T.M."/>
            <person name="Okura V.K."/>
            <person name="Oliveira M.C."/>
            <person name="Oliveira V.R."/>
            <person name="Pereira H.A."/>
            <person name="Rossi A."/>
            <person name="Sena J.A.D."/>
            <person name="Silva C."/>
            <person name="de Souza R.F."/>
            <person name="Spinola L.A.F."/>
            <person name="Takita M.A."/>
            <person name="Tamura R.E."/>
            <person name="Teixeira E.C."/>
            <person name="Tezza R.I.D."/>
            <person name="Trindade dos Santos M."/>
            <person name="Truffi D."/>
            <person name="Tsai S.M."/>
            <person name="White F.F."/>
            <person name="Setubal J.C."/>
            <person name="Kitajima J.P."/>
        </authorList>
    </citation>
    <scope>NUCLEOTIDE SEQUENCE [LARGE SCALE GENOMIC DNA]</scope>
    <source>
        <strain>ATCC 33913 / DSM 3586 / NCPPB 528 / LMG 568 / P 25</strain>
    </source>
</reference>
<organism>
    <name type="scientific">Xanthomonas campestris pv. campestris (strain ATCC 33913 / DSM 3586 / NCPPB 528 / LMG 568 / P 25)</name>
    <dbReference type="NCBI Taxonomy" id="190485"/>
    <lineage>
        <taxon>Bacteria</taxon>
        <taxon>Pseudomonadati</taxon>
        <taxon>Pseudomonadota</taxon>
        <taxon>Gammaproteobacteria</taxon>
        <taxon>Lysobacterales</taxon>
        <taxon>Lysobacteraceae</taxon>
        <taxon>Xanthomonas</taxon>
    </lineage>
</organism>
<protein>
    <recommendedName>
        <fullName evidence="1">Phosphoribosylaminoimidazole-succinocarboxamide synthase</fullName>
        <ecNumber evidence="1">6.3.2.6</ecNumber>
    </recommendedName>
    <alternativeName>
        <fullName evidence="1">SAICAR synthetase</fullName>
    </alternativeName>
</protein>
<gene>
    <name evidence="1" type="primary">purC</name>
    <name type="ordered locus">XCC0453</name>
</gene>
<name>PUR7_XANCP</name>
<keyword id="KW-0067">ATP-binding</keyword>
<keyword id="KW-0436">Ligase</keyword>
<keyword id="KW-0547">Nucleotide-binding</keyword>
<keyword id="KW-0658">Purine biosynthesis</keyword>
<keyword id="KW-1185">Reference proteome</keyword>